<protein>
    <recommendedName>
        <fullName evidence="1">Octanoyltransferase</fullName>
        <ecNumber evidence="1">2.3.1.181</ecNumber>
    </recommendedName>
    <alternativeName>
        <fullName evidence="1">Lipoate-protein ligase B</fullName>
    </alternativeName>
    <alternativeName>
        <fullName evidence="1">Lipoyl/octanoyl transferase</fullName>
    </alternativeName>
    <alternativeName>
        <fullName evidence="1">Octanoyl-[acyl-carrier-protein]-protein N-octanoyltransferase</fullName>
    </alternativeName>
</protein>
<accession>A4YT30</accession>
<name>LIPB_BRASO</name>
<gene>
    <name evidence="1" type="primary">lipB</name>
    <name type="ordered locus">BRADO3259</name>
</gene>
<evidence type="ECO:0000255" key="1">
    <source>
        <dbReference type="HAMAP-Rule" id="MF_00013"/>
    </source>
</evidence>
<evidence type="ECO:0000255" key="2">
    <source>
        <dbReference type="PROSITE-ProRule" id="PRU01067"/>
    </source>
</evidence>
<sequence>MVNGRETLDLTPFAGPPGNVAAWRISDALVDYAEATAFMEARAAAIAAHQAEELVWLLEHPPVYTSGTSGKPEDLRDPRFPFIATGRGGQVTYHGPGQRVAYVMLDLKRRRPDVRAYVAALEETIIRTLDAFNVRGERREDRVGVWVKRPDKGEGHEDKIAAIGVRLKRWVTFHGIAINVEPDLSHFQAIVPCGVTDPRYGVTSLVDLGLPVTMADVDVALRQAFESVFGATRAILPETA</sequence>
<organism>
    <name type="scientific">Bradyrhizobium sp. (strain ORS 278)</name>
    <dbReference type="NCBI Taxonomy" id="114615"/>
    <lineage>
        <taxon>Bacteria</taxon>
        <taxon>Pseudomonadati</taxon>
        <taxon>Pseudomonadota</taxon>
        <taxon>Alphaproteobacteria</taxon>
        <taxon>Hyphomicrobiales</taxon>
        <taxon>Nitrobacteraceae</taxon>
        <taxon>Bradyrhizobium</taxon>
    </lineage>
</organism>
<comment type="function">
    <text evidence="1">Catalyzes the transfer of endogenously produced octanoic acid from octanoyl-acyl-carrier-protein onto the lipoyl domains of lipoate-dependent enzymes. Lipoyl-ACP can also act as a substrate although octanoyl-ACP is likely to be the physiological substrate.</text>
</comment>
<comment type="catalytic activity">
    <reaction evidence="1">
        <text>octanoyl-[ACP] + L-lysyl-[protein] = N(6)-octanoyl-L-lysyl-[protein] + holo-[ACP] + H(+)</text>
        <dbReference type="Rhea" id="RHEA:17665"/>
        <dbReference type="Rhea" id="RHEA-COMP:9636"/>
        <dbReference type="Rhea" id="RHEA-COMP:9685"/>
        <dbReference type="Rhea" id="RHEA-COMP:9752"/>
        <dbReference type="Rhea" id="RHEA-COMP:9928"/>
        <dbReference type="ChEBI" id="CHEBI:15378"/>
        <dbReference type="ChEBI" id="CHEBI:29969"/>
        <dbReference type="ChEBI" id="CHEBI:64479"/>
        <dbReference type="ChEBI" id="CHEBI:78463"/>
        <dbReference type="ChEBI" id="CHEBI:78809"/>
        <dbReference type="EC" id="2.3.1.181"/>
    </reaction>
</comment>
<comment type="pathway">
    <text evidence="1">Protein modification; protein lipoylation via endogenous pathway; protein N(6)-(lipoyl)lysine from octanoyl-[acyl-carrier-protein]: step 1/2.</text>
</comment>
<comment type="subcellular location">
    <subcellularLocation>
        <location evidence="1">Cytoplasm</location>
    </subcellularLocation>
</comment>
<comment type="miscellaneous">
    <text evidence="1">In the reaction, the free carboxyl group of octanoic acid is attached via an amide linkage to the epsilon-amino group of a specific lysine residue of lipoyl domains of lipoate-dependent enzymes.</text>
</comment>
<comment type="similarity">
    <text evidence="1">Belongs to the LipB family.</text>
</comment>
<dbReference type="EC" id="2.3.1.181" evidence="1"/>
<dbReference type="EMBL" id="CU234118">
    <property type="protein sequence ID" value="CAL77056.1"/>
    <property type="molecule type" value="Genomic_DNA"/>
</dbReference>
<dbReference type="RefSeq" id="WP_011926216.1">
    <property type="nucleotide sequence ID" value="NC_009445.1"/>
</dbReference>
<dbReference type="SMR" id="A4YT30"/>
<dbReference type="STRING" id="114615.BRADO3259"/>
<dbReference type="KEGG" id="bra:BRADO3259"/>
<dbReference type="eggNOG" id="COG0321">
    <property type="taxonomic scope" value="Bacteria"/>
</dbReference>
<dbReference type="HOGENOM" id="CLU_035168_3_0_5"/>
<dbReference type="OrthoDB" id="9787061at2"/>
<dbReference type="UniPathway" id="UPA00538">
    <property type="reaction ID" value="UER00592"/>
</dbReference>
<dbReference type="Proteomes" id="UP000001994">
    <property type="component" value="Chromosome"/>
</dbReference>
<dbReference type="GO" id="GO:0005737">
    <property type="term" value="C:cytoplasm"/>
    <property type="evidence" value="ECO:0007669"/>
    <property type="project" value="UniProtKB-SubCell"/>
</dbReference>
<dbReference type="GO" id="GO:0033819">
    <property type="term" value="F:lipoyl(octanoyl) transferase activity"/>
    <property type="evidence" value="ECO:0007669"/>
    <property type="project" value="UniProtKB-EC"/>
</dbReference>
<dbReference type="GO" id="GO:0036211">
    <property type="term" value="P:protein modification process"/>
    <property type="evidence" value="ECO:0007669"/>
    <property type="project" value="InterPro"/>
</dbReference>
<dbReference type="CDD" id="cd16444">
    <property type="entry name" value="LipB"/>
    <property type="match status" value="1"/>
</dbReference>
<dbReference type="FunFam" id="3.30.930.10:FF:000159">
    <property type="entry name" value="Octanoyltransferase"/>
    <property type="match status" value="1"/>
</dbReference>
<dbReference type="Gene3D" id="3.30.930.10">
    <property type="entry name" value="Bira Bifunctional Protein, Domain 2"/>
    <property type="match status" value="1"/>
</dbReference>
<dbReference type="HAMAP" id="MF_00013">
    <property type="entry name" value="LipB"/>
    <property type="match status" value="1"/>
</dbReference>
<dbReference type="InterPro" id="IPR045864">
    <property type="entry name" value="aa-tRNA-synth_II/BPL/LPL"/>
</dbReference>
<dbReference type="InterPro" id="IPR004143">
    <property type="entry name" value="BPL_LPL_catalytic"/>
</dbReference>
<dbReference type="InterPro" id="IPR000544">
    <property type="entry name" value="Octanoyltransferase"/>
</dbReference>
<dbReference type="InterPro" id="IPR020605">
    <property type="entry name" value="Octanoyltransferase_CS"/>
</dbReference>
<dbReference type="NCBIfam" id="TIGR00214">
    <property type="entry name" value="lipB"/>
    <property type="match status" value="1"/>
</dbReference>
<dbReference type="NCBIfam" id="NF010921">
    <property type="entry name" value="PRK14341.1"/>
    <property type="match status" value="1"/>
</dbReference>
<dbReference type="NCBIfam" id="NF010925">
    <property type="entry name" value="PRK14345.1"/>
    <property type="match status" value="1"/>
</dbReference>
<dbReference type="PANTHER" id="PTHR10993:SF7">
    <property type="entry name" value="LIPOYLTRANSFERASE 2, MITOCHONDRIAL-RELATED"/>
    <property type="match status" value="1"/>
</dbReference>
<dbReference type="PANTHER" id="PTHR10993">
    <property type="entry name" value="OCTANOYLTRANSFERASE"/>
    <property type="match status" value="1"/>
</dbReference>
<dbReference type="Pfam" id="PF21948">
    <property type="entry name" value="LplA-B_cat"/>
    <property type="match status" value="1"/>
</dbReference>
<dbReference type="PIRSF" id="PIRSF016262">
    <property type="entry name" value="LPLase"/>
    <property type="match status" value="1"/>
</dbReference>
<dbReference type="SUPFAM" id="SSF55681">
    <property type="entry name" value="Class II aaRS and biotin synthetases"/>
    <property type="match status" value="1"/>
</dbReference>
<dbReference type="PROSITE" id="PS51733">
    <property type="entry name" value="BPL_LPL_CATALYTIC"/>
    <property type="match status" value="1"/>
</dbReference>
<dbReference type="PROSITE" id="PS01313">
    <property type="entry name" value="LIPB"/>
    <property type="match status" value="1"/>
</dbReference>
<reference key="1">
    <citation type="journal article" date="2007" name="Science">
        <title>Legumes symbioses: absence of nod genes in photosynthetic bradyrhizobia.</title>
        <authorList>
            <person name="Giraud E."/>
            <person name="Moulin L."/>
            <person name="Vallenet D."/>
            <person name="Barbe V."/>
            <person name="Cytryn E."/>
            <person name="Avarre J.-C."/>
            <person name="Jaubert M."/>
            <person name="Simon D."/>
            <person name="Cartieaux F."/>
            <person name="Prin Y."/>
            <person name="Bena G."/>
            <person name="Hannibal L."/>
            <person name="Fardoux J."/>
            <person name="Kojadinovic M."/>
            <person name="Vuillet L."/>
            <person name="Lajus A."/>
            <person name="Cruveiller S."/>
            <person name="Rouy Z."/>
            <person name="Mangenot S."/>
            <person name="Segurens B."/>
            <person name="Dossat C."/>
            <person name="Franck W.L."/>
            <person name="Chang W.-S."/>
            <person name="Saunders E."/>
            <person name="Bruce D."/>
            <person name="Richardson P."/>
            <person name="Normand P."/>
            <person name="Dreyfus B."/>
            <person name="Pignol D."/>
            <person name="Stacey G."/>
            <person name="Emerich D."/>
            <person name="Vermeglio A."/>
            <person name="Medigue C."/>
            <person name="Sadowsky M."/>
        </authorList>
    </citation>
    <scope>NUCLEOTIDE SEQUENCE [LARGE SCALE GENOMIC DNA]</scope>
    <source>
        <strain>ORS 278</strain>
    </source>
</reference>
<proteinExistence type="inferred from homology"/>
<feature type="chain" id="PRO_1000001090" description="Octanoyltransferase">
    <location>
        <begin position="1"/>
        <end position="240"/>
    </location>
</feature>
<feature type="domain" description="BPL/LPL catalytic" evidence="2">
    <location>
        <begin position="49"/>
        <end position="233"/>
    </location>
</feature>
<feature type="active site" description="Acyl-thioester intermediate" evidence="1">
    <location>
        <position position="193"/>
    </location>
</feature>
<feature type="binding site" evidence="1">
    <location>
        <begin position="87"/>
        <end position="94"/>
    </location>
    <ligand>
        <name>substrate</name>
    </ligand>
</feature>
<feature type="binding site" evidence="1">
    <location>
        <begin position="162"/>
        <end position="164"/>
    </location>
    <ligand>
        <name>substrate</name>
    </ligand>
</feature>
<feature type="binding site" evidence="1">
    <location>
        <begin position="175"/>
        <end position="177"/>
    </location>
    <ligand>
        <name>substrate</name>
    </ligand>
</feature>
<feature type="site" description="Lowers pKa of active site Cys" evidence="1">
    <location>
        <position position="159"/>
    </location>
</feature>
<keyword id="KW-0012">Acyltransferase</keyword>
<keyword id="KW-0963">Cytoplasm</keyword>
<keyword id="KW-1185">Reference proteome</keyword>
<keyword id="KW-0808">Transferase</keyword>